<reference key="1">
    <citation type="journal article" date="1995" name="J. Mol. Evol.">
        <title>The sequence, organization, and evolution of the Locusta migratoria mitochondrial genome.</title>
        <authorList>
            <person name="Flook P.K."/>
            <person name="Rowell C.H.F."/>
            <person name="Gellissen G."/>
        </authorList>
    </citation>
    <scope>NUCLEOTIDE SEQUENCE [GENOMIC DNA]</scope>
</reference>
<comment type="function">
    <text evidence="1">Core subunit of the mitochondrial membrane respiratory chain NADH dehydrogenase (Complex I) that is believed to belong to the minimal assembly required for catalysis. Complex I functions in the transfer of electrons from NADH to the respiratory chain. The immediate electron acceptor for the enzyme is believed to be ubiquinone (By similarity).</text>
</comment>
<comment type="catalytic activity">
    <reaction>
        <text>a ubiquinone + NADH + 5 H(+)(in) = a ubiquinol + NAD(+) + 4 H(+)(out)</text>
        <dbReference type="Rhea" id="RHEA:29091"/>
        <dbReference type="Rhea" id="RHEA-COMP:9565"/>
        <dbReference type="Rhea" id="RHEA-COMP:9566"/>
        <dbReference type="ChEBI" id="CHEBI:15378"/>
        <dbReference type="ChEBI" id="CHEBI:16389"/>
        <dbReference type="ChEBI" id="CHEBI:17976"/>
        <dbReference type="ChEBI" id="CHEBI:57540"/>
        <dbReference type="ChEBI" id="CHEBI:57945"/>
        <dbReference type="EC" id="7.1.1.2"/>
    </reaction>
</comment>
<comment type="subcellular location">
    <subcellularLocation>
        <location evidence="1">Mitochondrion membrane</location>
        <topology evidence="1">Multi-pass membrane protein</topology>
    </subcellularLocation>
</comment>
<comment type="similarity">
    <text evidence="3">Belongs to the complex I subunit 3 family.</text>
</comment>
<organism>
    <name type="scientific">Locusta migratoria</name>
    <name type="common">Migratory locust</name>
    <dbReference type="NCBI Taxonomy" id="7004"/>
    <lineage>
        <taxon>Eukaryota</taxon>
        <taxon>Metazoa</taxon>
        <taxon>Ecdysozoa</taxon>
        <taxon>Arthropoda</taxon>
        <taxon>Hexapoda</taxon>
        <taxon>Insecta</taxon>
        <taxon>Pterygota</taxon>
        <taxon>Neoptera</taxon>
        <taxon>Polyneoptera</taxon>
        <taxon>Orthoptera</taxon>
        <taxon>Caelifera</taxon>
        <taxon>Acrididea</taxon>
        <taxon>Acridomorpha</taxon>
        <taxon>Acridoidea</taxon>
        <taxon>Acrididae</taxon>
        <taxon>Oedipodinae</taxon>
        <taxon>Locusta</taxon>
    </lineage>
</organism>
<geneLocation type="mitochondrion"/>
<keyword id="KW-0249">Electron transport</keyword>
<keyword id="KW-0472">Membrane</keyword>
<keyword id="KW-0496">Mitochondrion</keyword>
<keyword id="KW-0520">NAD</keyword>
<keyword id="KW-0679">Respiratory chain</keyword>
<keyword id="KW-1278">Translocase</keyword>
<keyword id="KW-0812">Transmembrane</keyword>
<keyword id="KW-1133">Transmembrane helix</keyword>
<keyword id="KW-0813">Transport</keyword>
<keyword id="KW-0830">Ubiquinone</keyword>
<feature type="chain" id="PRO_0000117757" description="NADH-ubiquinone oxidoreductase chain 3">
    <location>
        <begin position="1"/>
        <end position="115"/>
    </location>
</feature>
<feature type="transmembrane region" description="Helical" evidence="2">
    <location>
        <begin position="1"/>
        <end position="21"/>
    </location>
</feature>
<feature type="transmembrane region" description="Helical" evidence="2">
    <location>
        <begin position="58"/>
        <end position="78"/>
    </location>
</feature>
<feature type="transmembrane region" description="Helical" evidence="2">
    <location>
        <begin position="84"/>
        <end position="104"/>
    </location>
</feature>
<accession>Q36422</accession>
<dbReference type="EC" id="7.1.1.2"/>
<dbReference type="EMBL" id="X80245">
    <property type="protein sequence ID" value="CAA56528.1"/>
    <property type="molecule type" value="Genomic_DNA"/>
</dbReference>
<dbReference type="PIR" id="T11468">
    <property type="entry name" value="T11468"/>
</dbReference>
<dbReference type="RefSeq" id="NP_007296.1">
    <property type="nucleotide sequence ID" value="NC_001712.1"/>
</dbReference>
<dbReference type="SMR" id="Q36422"/>
<dbReference type="GeneID" id="807965"/>
<dbReference type="CTD" id="4537"/>
<dbReference type="GO" id="GO:0031966">
    <property type="term" value="C:mitochondrial membrane"/>
    <property type="evidence" value="ECO:0007669"/>
    <property type="project" value="UniProtKB-SubCell"/>
</dbReference>
<dbReference type="GO" id="GO:0030964">
    <property type="term" value="C:NADH dehydrogenase complex"/>
    <property type="evidence" value="ECO:0007669"/>
    <property type="project" value="TreeGrafter"/>
</dbReference>
<dbReference type="GO" id="GO:0008137">
    <property type="term" value="F:NADH dehydrogenase (ubiquinone) activity"/>
    <property type="evidence" value="ECO:0007669"/>
    <property type="project" value="UniProtKB-EC"/>
</dbReference>
<dbReference type="Gene3D" id="1.20.58.1610">
    <property type="entry name" value="NADH:ubiquinone/plastoquinone oxidoreductase, chain 3"/>
    <property type="match status" value="1"/>
</dbReference>
<dbReference type="InterPro" id="IPR000440">
    <property type="entry name" value="NADH_UbQ/plastoQ_OxRdtase_su3"/>
</dbReference>
<dbReference type="InterPro" id="IPR038430">
    <property type="entry name" value="NDAH_ubi_oxred_su3_sf"/>
</dbReference>
<dbReference type="PANTHER" id="PTHR11058">
    <property type="entry name" value="NADH-UBIQUINONE OXIDOREDUCTASE CHAIN 3"/>
    <property type="match status" value="1"/>
</dbReference>
<dbReference type="PANTHER" id="PTHR11058:SF9">
    <property type="entry name" value="NADH-UBIQUINONE OXIDOREDUCTASE CHAIN 3"/>
    <property type="match status" value="1"/>
</dbReference>
<dbReference type="Pfam" id="PF00507">
    <property type="entry name" value="Oxidored_q4"/>
    <property type="match status" value="1"/>
</dbReference>
<name>NU3M_LOCMI</name>
<sequence>MMMLMTSITISFLLPMIVMLLATTLSKKSINDREKSSPFECGFDPKLNMPFSIQFFLIAVIFLIFDVEIALILPIVIIMKTSNIMVWTLSTMLFIIILLVGLYYEWNQGALKWAN</sequence>
<gene>
    <name type="primary">ND3</name>
</gene>
<protein>
    <recommendedName>
        <fullName>NADH-ubiquinone oxidoreductase chain 3</fullName>
        <ecNumber>7.1.1.2</ecNumber>
    </recommendedName>
    <alternativeName>
        <fullName>NADH dehydrogenase subunit 3</fullName>
    </alternativeName>
</protein>
<proteinExistence type="inferred from homology"/>
<evidence type="ECO:0000250" key="1"/>
<evidence type="ECO:0000255" key="2"/>
<evidence type="ECO:0000305" key="3"/>